<protein>
    <recommendedName>
        <fullName evidence="1">PF03932 family protein CutC</fullName>
    </recommendedName>
</protein>
<organism>
    <name type="scientific">Escherichia coli O6:H1 (strain CFT073 / ATCC 700928 / UPEC)</name>
    <dbReference type="NCBI Taxonomy" id="199310"/>
    <lineage>
        <taxon>Bacteria</taxon>
        <taxon>Pseudomonadati</taxon>
        <taxon>Pseudomonadota</taxon>
        <taxon>Gammaproteobacteria</taxon>
        <taxon>Enterobacterales</taxon>
        <taxon>Enterobacteriaceae</taxon>
        <taxon>Escherichia</taxon>
    </lineage>
</organism>
<reference key="1">
    <citation type="journal article" date="2002" name="Proc. Natl. Acad. Sci. U.S.A.">
        <title>Extensive mosaic structure revealed by the complete genome sequence of uropathogenic Escherichia coli.</title>
        <authorList>
            <person name="Welch R.A."/>
            <person name="Burland V."/>
            <person name="Plunkett G. III"/>
            <person name="Redford P."/>
            <person name="Roesch P."/>
            <person name="Rasko D."/>
            <person name="Buckles E.L."/>
            <person name="Liou S.-R."/>
            <person name="Boutin A."/>
            <person name="Hackett J."/>
            <person name="Stroud D."/>
            <person name="Mayhew G.F."/>
            <person name="Rose D.J."/>
            <person name="Zhou S."/>
            <person name="Schwartz D.C."/>
            <person name="Perna N.T."/>
            <person name="Mobley H.L.T."/>
            <person name="Donnenberg M.S."/>
            <person name="Blattner F.R."/>
        </authorList>
    </citation>
    <scope>NUCLEOTIDE SEQUENCE [LARGE SCALE GENOMIC DNA]</scope>
    <source>
        <strain>CFT073 / ATCC 700928 / UPEC</strain>
    </source>
</reference>
<dbReference type="EMBL" id="AE014075">
    <property type="protein sequence ID" value="AAN80748.1"/>
    <property type="molecule type" value="Genomic_DNA"/>
</dbReference>
<dbReference type="RefSeq" id="WP_001185734.1">
    <property type="nucleotide sequence ID" value="NZ_CP051263.1"/>
</dbReference>
<dbReference type="SMR" id="Q8FGQ2"/>
<dbReference type="STRING" id="199310.c2289"/>
<dbReference type="KEGG" id="ecc:c2289"/>
<dbReference type="eggNOG" id="COG3142">
    <property type="taxonomic scope" value="Bacteria"/>
</dbReference>
<dbReference type="HOGENOM" id="CLU_050555_3_1_6"/>
<dbReference type="BioCyc" id="ECOL199310:C2289-MONOMER"/>
<dbReference type="Proteomes" id="UP000001410">
    <property type="component" value="Chromosome"/>
</dbReference>
<dbReference type="GO" id="GO:0005737">
    <property type="term" value="C:cytoplasm"/>
    <property type="evidence" value="ECO:0007669"/>
    <property type="project" value="UniProtKB-SubCell"/>
</dbReference>
<dbReference type="GO" id="GO:0005507">
    <property type="term" value="F:copper ion binding"/>
    <property type="evidence" value="ECO:0007669"/>
    <property type="project" value="TreeGrafter"/>
</dbReference>
<dbReference type="FunFam" id="3.20.20.380:FF:000001">
    <property type="entry name" value="Copper homeostasis protein CutC"/>
    <property type="match status" value="1"/>
</dbReference>
<dbReference type="Gene3D" id="3.20.20.380">
    <property type="entry name" value="Copper homeostasis (CutC) domain"/>
    <property type="match status" value="1"/>
</dbReference>
<dbReference type="HAMAP" id="MF_00795">
    <property type="entry name" value="CutC"/>
    <property type="match status" value="1"/>
</dbReference>
<dbReference type="InterPro" id="IPR005627">
    <property type="entry name" value="CutC-like"/>
</dbReference>
<dbReference type="InterPro" id="IPR036822">
    <property type="entry name" value="CutC-like_dom_sf"/>
</dbReference>
<dbReference type="NCBIfam" id="NF008603">
    <property type="entry name" value="PRK11572.1"/>
    <property type="match status" value="1"/>
</dbReference>
<dbReference type="PANTHER" id="PTHR12598">
    <property type="entry name" value="COPPER HOMEOSTASIS PROTEIN CUTC"/>
    <property type="match status" value="1"/>
</dbReference>
<dbReference type="PANTHER" id="PTHR12598:SF0">
    <property type="entry name" value="COPPER HOMEOSTASIS PROTEIN CUTC HOMOLOG"/>
    <property type="match status" value="1"/>
</dbReference>
<dbReference type="Pfam" id="PF03932">
    <property type="entry name" value="CutC"/>
    <property type="match status" value="1"/>
</dbReference>
<dbReference type="SUPFAM" id="SSF110395">
    <property type="entry name" value="CutC-like"/>
    <property type="match status" value="1"/>
</dbReference>
<accession>Q8FGQ2</accession>
<evidence type="ECO:0000255" key="1">
    <source>
        <dbReference type="HAMAP-Rule" id="MF_00795"/>
    </source>
</evidence>
<name>CUTC_ECOL6</name>
<gene>
    <name evidence="1" type="primary">cutC</name>
    <name type="ordered locus">c2289</name>
</gene>
<sequence>MALLEICCYSMECALTAQQNGADRVELCAAPKEGGLTPSLGVLKSVRQRVTIPVHPIIRPRGGDFCYSDGEFAAILEDVRTVRELGFPGLVTGVLDVDGNVDMPRMEKIMAAAGPLAVTFHRAFDMCANPLNTLNNLTELGIARVLTSGQKSDALQGLSKIMELIAHRDAPIIMAGAGVRAENLHHFLDAGVLEVHSSAGAWQASPMRYRNQGLSMSSDAHADEYSRYVVDGAAVAEMKGIIERHQAK</sequence>
<feature type="chain" id="PRO_0000215066" description="PF03932 family protein CutC">
    <location>
        <begin position="1"/>
        <end position="248"/>
    </location>
</feature>
<comment type="subunit">
    <text evidence="1">Homodimer.</text>
</comment>
<comment type="subcellular location">
    <subcellularLocation>
        <location evidence="1">Cytoplasm</location>
    </subcellularLocation>
</comment>
<comment type="similarity">
    <text evidence="1">Belongs to the CutC family.</text>
</comment>
<comment type="caution">
    <text evidence="1">Once thought to be involved in copper homeostasis, experiments in E.coli have shown this is not the case.</text>
</comment>
<keyword id="KW-0963">Cytoplasm</keyword>
<keyword id="KW-1185">Reference proteome</keyword>
<proteinExistence type="inferred from homology"/>